<accession>Q8Z553</accession>
<evidence type="ECO:0000250" key="1"/>
<evidence type="ECO:0000255" key="2">
    <source>
        <dbReference type="HAMAP-Rule" id="MF_00753"/>
    </source>
</evidence>
<reference key="1">
    <citation type="journal article" date="2001" name="Nature">
        <title>Complete genome sequence of a multiple drug resistant Salmonella enterica serovar Typhi CT18.</title>
        <authorList>
            <person name="Parkhill J."/>
            <person name="Dougan G."/>
            <person name="James K.D."/>
            <person name="Thomson N.R."/>
            <person name="Pickard D."/>
            <person name="Wain J."/>
            <person name="Churcher C.M."/>
            <person name="Mungall K.L."/>
            <person name="Bentley S.D."/>
            <person name="Holden M.T.G."/>
            <person name="Sebaihia M."/>
            <person name="Baker S."/>
            <person name="Basham D."/>
            <person name="Brooks K."/>
            <person name="Chillingworth T."/>
            <person name="Connerton P."/>
            <person name="Cronin A."/>
            <person name="Davis P."/>
            <person name="Davies R.M."/>
            <person name="Dowd L."/>
            <person name="White N."/>
            <person name="Farrar J."/>
            <person name="Feltwell T."/>
            <person name="Hamlin N."/>
            <person name="Haque A."/>
            <person name="Hien T.T."/>
            <person name="Holroyd S."/>
            <person name="Jagels K."/>
            <person name="Krogh A."/>
            <person name="Larsen T.S."/>
            <person name="Leather S."/>
            <person name="Moule S."/>
            <person name="O'Gaora P."/>
            <person name="Parry C."/>
            <person name="Quail M.A."/>
            <person name="Rutherford K.M."/>
            <person name="Simmonds M."/>
            <person name="Skelton J."/>
            <person name="Stevens K."/>
            <person name="Whitehead S."/>
            <person name="Barrell B.G."/>
        </authorList>
    </citation>
    <scope>NUCLEOTIDE SEQUENCE [LARGE SCALE GENOMIC DNA]</scope>
    <source>
        <strain>CT18</strain>
    </source>
</reference>
<reference key="2">
    <citation type="journal article" date="2003" name="J. Bacteriol.">
        <title>Comparative genomics of Salmonella enterica serovar Typhi strains Ty2 and CT18.</title>
        <authorList>
            <person name="Deng W."/>
            <person name="Liou S.-R."/>
            <person name="Plunkett G. III"/>
            <person name="Mayhew G.F."/>
            <person name="Rose D.J."/>
            <person name="Burland V."/>
            <person name="Kodoyianni V."/>
            <person name="Schwartz D.C."/>
            <person name="Blattner F.R."/>
        </authorList>
    </citation>
    <scope>NUCLEOTIDE SEQUENCE [LARGE SCALE GENOMIC DNA]</scope>
    <source>
        <strain>ATCC 700931 / Ty2</strain>
    </source>
</reference>
<sequence length="419" mass="45754">MKFDTVIMGGGLAGLLCGLQLQQHGLRCAIVTRGQSALHFSSGSLDLLSALPNGQPVTDITAGLDALRRQAPEHPYSRLGAQKVLTLAQQAQTLLNASGAQLYGDVQQAHQRVTPLGTLRSTWLSSPEVPVWPLSAQRICVVGVSGLLDFQAHLAAASLRQRDLNVETAEIDLPELDVLRDNPTEFRAVNIARLLDNEEKWQLLYDALSPIATNCDMIIMPACFGLANDTLWRWLNERLPCALTLLPTLPPSVLGIRLHNQLQRQFVRQGGIWMPGDEVKKVTCRRGTVSEIWTRNHADIPLRPRFAVLASGSFFSSGLVAEREGIREPILGLDVQQTATRAEWYQQHFFDPQPWQQFGVVTDDAFRPSLAGNTVENLYAIGSVLAGFDPIAEGCGGGVCAVSALQAAHHIAERAGEQQ</sequence>
<organism>
    <name type="scientific">Salmonella typhi</name>
    <dbReference type="NCBI Taxonomy" id="90370"/>
    <lineage>
        <taxon>Bacteria</taxon>
        <taxon>Pseudomonadati</taxon>
        <taxon>Pseudomonadota</taxon>
        <taxon>Gammaproteobacteria</taxon>
        <taxon>Enterobacterales</taxon>
        <taxon>Enterobacteriaceae</taxon>
        <taxon>Salmonella</taxon>
    </lineage>
</organism>
<keyword id="KW-0997">Cell inner membrane</keyword>
<keyword id="KW-1003">Cell membrane</keyword>
<keyword id="KW-0285">Flavoprotein</keyword>
<keyword id="KW-0288">FMN</keyword>
<keyword id="KW-0472">Membrane</keyword>
<keyword id="KW-0560">Oxidoreductase</keyword>
<protein>
    <recommendedName>
        <fullName evidence="2">Anaerobic glycerol-3-phosphate dehydrogenase subunit B</fullName>
        <shortName evidence="2">Anaerobic G-3-P dehydrogenase subunit B</shortName>
        <shortName evidence="2">Anaerobic G3Pdhase B</shortName>
        <ecNumber evidence="2">1.1.5.3</ecNumber>
    </recommendedName>
</protein>
<gene>
    <name evidence="2" type="primary">glpB</name>
    <name type="ordered locus">STY2514</name>
    <name type="ordered locus">t0579</name>
</gene>
<proteinExistence type="inferred from homology"/>
<dbReference type="EC" id="1.1.5.3" evidence="2"/>
<dbReference type="EMBL" id="AL513382">
    <property type="protein sequence ID" value="CAD07517.1"/>
    <property type="molecule type" value="Genomic_DNA"/>
</dbReference>
<dbReference type="EMBL" id="AE014613">
    <property type="protein sequence ID" value="AAO68285.1"/>
    <property type="molecule type" value="Genomic_DNA"/>
</dbReference>
<dbReference type="RefSeq" id="NP_456828.1">
    <property type="nucleotide sequence ID" value="NC_003198.1"/>
</dbReference>
<dbReference type="RefSeq" id="WP_000667159.1">
    <property type="nucleotide sequence ID" value="NZ_WSUQ01000009.1"/>
</dbReference>
<dbReference type="STRING" id="220341.gene:17586414"/>
<dbReference type="KEGG" id="stt:t0579"/>
<dbReference type="KEGG" id="sty:STY2514"/>
<dbReference type="PATRIC" id="fig|220341.7.peg.2545"/>
<dbReference type="eggNOG" id="COG3075">
    <property type="taxonomic scope" value="Bacteria"/>
</dbReference>
<dbReference type="HOGENOM" id="CLU_047793_0_0_6"/>
<dbReference type="OMA" id="CFGLENQ"/>
<dbReference type="OrthoDB" id="6395323at2"/>
<dbReference type="UniPathway" id="UPA00618">
    <property type="reaction ID" value="UER00673"/>
</dbReference>
<dbReference type="Proteomes" id="UP000000541">
    <property type="component" value="Chromosome"/>
</dbReference>
<dbReference type="Proteomes" id="UP000002670">
    <property type="component" value="Chromosome"/>
</dbReference>
<dbReference type="GO" id="GO:0009331">
    <property type="term" value="C:glycerol-3-phosphate dehydrogenase (FAD) complex"/>
    <property type="evidence" value="ECO:0007669"/>
    <property type="project" value="InterPro"/>
</dbReference>
<dbReference type="GO" id="GO:0005886">
    <property type="term" value="C:plasma membrane"/>
    <property type="evidence" value="ECO:0007669"/>
    <property type="project" value="UniProtKB-SubCell"/>
</dbReference>
<dbReference type="GO" id="GO:0004368">
    <property type="term" value="F:glycerol-3-phosphate dehydrogenase (quinone) activity"/>
    <property type="evidence" value="ECO:0007669"/>
    <property type="project" value="UniProtKB-UniRule"/>
</dbReference>
<dbReference type="GO" id="GO:0019563">
    <property type="term" value="P:glycerol catabolic process"/>
    <property type="evidence" value="ECO:0007669"/>
    <property type="project" value="UniProtKB-UniRule"/>
</dbReference>
<dbReference type="Gene3D" id="3.50.50.60">
    <property type="entry name" value="FAD/NAD(P)-binding domain"/>
    <property type="match status" value="1"/>
</dbReference>
<dbReference type="HAMAP" id="MF_00753">
    <property type="entry name" value="Glycerol3P_GlpB"/>
    <property type="match status" value="1"/>
</dbReference>
<dbReference type="InterPro" id="IPR003953">
    <property type="entry name" value="FAD-dep_OxRdtase_2_FAD-bd"/>
</dbReference>
<dbReference type="InterPro" id="IPR036188">
    <property type="entry name" value="FAD/NAD-bd_sf"/>
</dbReference>
<dbReference type="InterPro" id="IPR009158">
    <property type="entry name" value="G3P_DH_GlpB_su"/>
</dbReference>
<dbReference type="NCBIfam" id="TIGR03378">
    <property type="entry name" value="glycerol3P_GlpB"/>
    <property type="match status" value="1"/>
</dbReference>
<dbReference type="NCBIfam" id="NF003718">
    <property type="entry name" value="PRK05329.1-1"/>
    <property type="match status" value="1"/>
</dbReference>
<dbReference type="NCBIfam" id="NF003719">
    <property type="entry name" value="PRK05329.1-2"/>
    <property type="match status" value="1"/>
</dbReference>
<dbReference type="NCBIfam" id="NF003720">
    <property type="entry name" value="PRK05329.1-3"/>
    <property type="match status" value="1"/>
</dbReference>
<dbReference type="NCBIfam" id="NF003721">
    <property type="entry name" value="PRK05329.1-4"/>
    <property type="match status" value="1"/>
</dbReference>
<dbReference type="Pfam" id="PF00890">
    <property type="entry name" value="FAD_binding_2"/>
    <property type="match status" value="1"/>
</dbReference>
<dbReference type="PIRSF" id="PIRSF000141">
    <property type="entry name" value="Anaerobic_G3P_dh"/>
    <property type="match status" value="1"/>
</dbReference>
<dbReference type="SUPFAM" id="SSF51905">
    <property type="entry name" value="FAD/NAD(P)-binding domain"/>
    <property type="match status" value="1"/>
</dbReference>
<comment type="function">
    <text evidence="2">Conversion of glycerol 3-phosphate to dihydroxyacetone. Uses fumarate or nitrate as electron acceptor.</text>
</comment>
<comment type="catalytic activity">
    <reaction evidence="2">
        <text>a quinone + sn-glycerol 3-phosphate = dihydroxyacetone phosphate + a quinol</text>
        <dbReference type="Rhea" id="RHEA:18977"/>
        <dbReference type="ChEBI" id="CHEBI:24646"/>
        <dbReference type="ChEBI" id="CHEBI:57597"/>
        <dbReference type="ChEBI" id="CHEBI:57642"/>
        <dbReference type="ChEBI" id="CHEBI:132124"/>
        <dbReference type="EC" id="1.1.5.3"/>
    </reaction>
</comment>
<comment type="cofactor">
    <cofactor evidence="2">
        <name>FMN</name>
        <dbReference type="ChEBI" id="CHEBI:58210"/>
    </cofactor>
</comment>
<comment type="pathway">
    <text evidence="2">Polyol metabolism; glycerol degradation via glycerol kinase pathway; glycerone phosphate from sn-glycerol 3-phosphate (anaerobic route): step 1/1.</text>
</comment>
<comment type="subunit">
    <text evidence="2">Composed of a catalytic GlpA/B dimer and of membrane bound GlpC.</text>
</comment>
<comment type="subcellular location">
    <subcellularLocation>
        <location evidence="1">Cell inner membrane</location>
        <topology evidence="1">Peripheral membrane protein</topology>
    </subcellularLocation>
    <text evidence="1">Loosely bound to the cytoplasmic membrane often occurring in vesicles associated with fumarate reductase.</text>
</comment>
<comment type="similarity">
    <text evidence="2">Belongs to the anaerobic G-3-P dehydrogenase subunit B family.</text>
</comment>
<name>GLPB_SALTI</name>
<feature type="chain" id="PRO_0000204565" description="Anaerobic glycerol-3-phosphate dehydrogenase subunit B">
    <location>
        <begin position="1"/>
        <end position="419"/>
    </location>
</feature>